<protein>
    <recommendedName>
        <fullName evidence="1">UDP-N-acetylmuramate--L-alanine ligase</fullName>
        <ecNumber evidence="1">6.3.2.8</ecNumber>
    </recommendedName>
    <alternativeName>
        <fullName evidence="1">UDP-N-acetylmuramoyl-L-alanine synthetase</fullName>
    </alternativeName>
</protein>
<name>MURC_HELPY</name>
<organism>
    <name type="scientific">Helicobacter pylori (strain ATCC 700392 / 26695)</name>
    <name type="common">Campylobacter pylori</name>
    <dbReference type="NCBI Taxonomy" id="85962"/>
    <lineage>
        <taxon>Bacteria</taxon>
        <taxon>Pseudomonadati</taxon>
        <taxon>Campylobacterota</taxon>
        <taxon>Epsilonproteobacteria</taxon>
        <taxon>Campylobacterales</taxon>
        <taxon>Helicobacteraceae</taxon>
        <taxon>Helicobacter</taxon>
    </lineage>
</organism>
<feature type="chain" id="PRO_0000182102" description="UDP-N-acetylmuramate--L-alanine ligase">
    <location>
        <begin position="1"/>
        <end position="449"/>
    </location>
</feature>
<feature type="binding site" evidence="1">
    <location>
        <begin position="121"/>
        <end position="127"/>
    </location>
    <ligand>
        <name>ATP</name>
        <dbReference type="ChEBI" id="CHEBI:30616"/>
    </ligand>
</feature>
<sequence>MLETPKVLLKNLQDCKIHFIGIGGIGISGLAKYLKAQGATISGSDIAISPSVKYLKALGVEINIPHDPKAINNQDVIIHSAIIKEDNKEIQRAKELEIPILSRKDALYSILKDKRVFSVCGAHGKSSITAMLSAICPSFGAIIGAHSKEFDSNVRESANDSLVFEADESDSSFLFSNPYAAIVPNTEPEHLEHYGHDLERFFFAYEYFLDHAQKRVIYKEDPFLKNYSKNAIVLEKKDIYNIQYILKDGEPYTSFELKDLGAFLVWGLGEHNATNASLAILSALDELHLEEIRNNLLNFKGIKKRFDILQKNALILIDDYAHHPTEISATLKSARIYANLLNTQEKIIVIWQAHKYSRLMDNLEEFKKCFSEHCDRLIILPVYSASEVKRDIDLKAHFKHYNPTFIDRVRKKGDFLELLVNDNVVETIEKGFVIGFGAGDITYQLRGEM</sequence>
<keyword id="KW-0067">ATP-binding</keyword>
<keyword id="KW-0131">Cell cycle</keyword>
<keyword id="KW-0132">Cell division</keyword>
<keyword id="KW-0133">Cell shape</keyword>
<keyword id="KW-0961">Cell wall biogenesis/degradation</keyword>
<keyword id="KW-0963">Cytoplasm</keyword>
<keyword id="KW-0436">Ligase</keyword>
<keyword id="KW-0547">Nucleotide-binding</keyword>
<keyword id="KW-0573">Peptidoglycan synthesis</keyword>
<keyword id="KW-1185">Reference proteome</keyword>
<gene>
    <name evidence="1" type="primary">murC</name>
    <name type="ordered locus">HP_0623</name>
</gene>
<comment type="function">
    <text evidence="1">Cell wall formation.</text>
</comment>
<comment type="catalytic activity">
    <reaction evidence="1">
        <text>UDP-N-acetyl-alpha-D-muramate + L-alanine + ATP = UDP-N-acetyl-alpha-D-muramoyl-L-alanine + ADP + phosphate + H(+)</text>
        <dbReference type="Rhea" id="RHEA:23372"/>
        <dbReference type="ChEBI" id="CHEBI:15378"/>
        <dbReference type="ChEBI" id="CHEBI:30616"/>
        <dbReference type="ChEBI" id="CHEBI:43474"/>
        <dbReference type="ChEBI" id="CHEBI:57972"/>
        <dbReference type="ChEBI" id="CHEBI:70757"/>
        <dbReference type="ChEBI" id="CHEBI:83898"/>
        <dbReference type="ChEBI" id="CHEBI:456216"/>
        <dbReference type="EC" id="6.3.2.8"/>
    </reaction>
</comment>
<comment type="pathway">
    <text evidence="1">Cell wall biogenesis; peptidoglycan biosynthesis.</text>
</comment>
<comment type="subcellular location">
    <subcellularLocation>
        <location evidence="1">Cytoplasm</location>
    </subcellularLocation>
</comment>
<comment type="similarity">
    <text evidence="1">Belongs to the MurCDEF family.</text>
</comment>
<proteinExistence type="inferred from homology"/>
<evidence type="ECO:0000255" key="1">
    <source>
        <dbReference type="HAMAP-Rule" id="MF_00046"/>
    </source>
</evidence>
<dbReference type="EC" id="6.3.2.8" evidence="1"/>
<dbReference type="EMBL" id="AE000511">
    <property type="protein sequence ID" value="AAD07686.1"/>
    <property type="molecule type" value="Genomic_DNA"/>
</dbReference>
<dbReference type="PIR" id="G64597">
    <property type="entry name" value="G64597"/>
</dbReference>
<dbReference type="RefSeq" id="NP_207417.1">
    <property type="nucleotide sequence ID" value="NC_000915.1"/>
</dbReference>
<dbReference type="RefSeq" id="WP_000894779.1">
    <property type="nucleotide sequence ID" value="NC_018939.1"/>
</dbReference>
<dbReference type="SMR" id="O25340"/>
<dbReference type="FunCoup" id="O25340">
    <property type="interactions" value="230"/>
</dbReference>
<dbReference type="STRING" id="85962.HP_0623"/>
<dbReference type="PaxDb" id="85962-C694_03225"/>
<dbReference type="EnsemblBacteria" id="AAD07686">
    <property type="protein sequence ID" value="AAD07686"/>
    <property type="gene ID" value="HP_0623"/>
</dbReference>
<dbReference type="KEGG" id="heo:C694_03225"/>
<dbReference type="KEGG" id="hpy:HP_0623"/>
<dbReference type="PATRIC" id="fig|85962.47.peg.673"/>
<dbReference type="eggNOG" id="COG0773">
    <property type="taxonomic scope" value="Bacteria"/>
</dbReference>
<dbReference type="InParanoid" id="O25340"/>
<dbReference type="OrthoDB" id="9804126at2"/>
<dbReference type="PhylomeDB" id="O25340"/>
<dbReference type="UniPathway" id="UPA00219"/>
<dbReference type="Proteomes" id="UP000000429">
    <property type="component" value="Chromosome"/>
</dbReference>
<dbReference type="GO" id="GO:0005737">
    <property type="term" value="C:cytoplasm"/>
    <property type="evidence" value="ECO:0007669"/>
    <property type="project" value="UniProtKB-SubCell"/>
</dbReference>
<dbReference type="GO" id="GO:0005524">
    <property type="term" value="F:ATP binding"/>
    <property type="evidence" value="ECO:0007669"/>
    <property type="project" value="UniProtKB-UniRule"/>
</dbReference>
<dbReference type="GO" id="GO:0008763">
    <property type="term" value="F:UDP-N-acetylmuramate-L-alanine ligase activity"/>
    <property type="evidence" value="ECO:0007669"/>
    <property type="project" value="UniProtKB-UniRule"/>
</dbReference>
<dbReference type="GO" id="GO:0051301">
    <property type="term" value="P:cell division"/>
    <property type="evidence" value="ECO:0007669"/>
    <property type="project" value="UniProtKB-KW"/>
</dbReference>
<dbReference type="GO" id="GO:0071555">
    <property type="term" value="P:cell wall organization"/>
    <property type="evidence" value="ECO:0007669"/>
    <property type="project" value="UniProtKB-KW"/>
</dbReference>
<dbReference type="GO" id="GO:0009252">
    <property type="term" value="P:peptidoglycan biosynthetic process"/>
    <property type="evidence" value="ECO:0007669"/>
    <property type="project" value="UniProtKB-UniRule"/>
</dbReference>
<dbReference type="GO" id="GO:0008360">
    <property type="term" value="P:regulation of cell shape"/>
    <property type="evidence" value="ECO:0007669"/>
    <property type="project" value="UniProtKB-KW"/>
</dbReference>
<dbReference type="Gene3D" id="3.90.190.20">
    <property type="entry name" value="Mur ligase, C-terminal domain"/>
    <property type="match status" value="1"/>
</dbReference>
<dbReference type="Gene3D" id="3.40.1190.10">
    <property type="entry name" value="Mur-like, catalytic domain"/>
    <property type="match status" value="1"/>
</dbReference>
<dbReference type="Gene3D" id="3.40.50.720">
    <property type="entry name" value="NAD(P)-binding Rossmann-like Domain"/>
    <property type="match status" value="1"/>
</dbReference>
<dbReference type="HAMAP" id="MF_00046">
    <property type="entry name" value="MurC"/>
    <property type="match status" value="1"/>
</dbReference>
<dbReference type="InterPro" id="IPR036565">
    <property type="entry name" value="Mur-like_cat_sf"/>
</dbReference>
<dbReference type="InterPro" id="IPR004101">
    <property type="entry name" value="Mur_ligase_C"/>
</dbReference>
<dbReference type="InterPro" id="IPR036615">
    <property type="entry name" value="Mur_ligase_C_dom_sf"/>
</dbReference>
<dbReference type="InterPro" id="IPR013221">
    <property type="entry name" value="Mur_ligase_cen"/>
</dbReference>
<dbReference type="InterPro" id="IPR000713">
    <property type="entry name" value="Mur_ligase_N"/>
</dbReference>
<dbReference type="InterPro" id="IPR050061">
    <property type="entry name" value="MurCDEF_pg_biosynth"/>
</dbReference>
<dbReference type="InterPro" id="IPR005758">
    <property type="entry name" value="UDP-N-AcMur_Ala_ligase_MurC"/>
</dbReference>
<dbReference type="NCBIfam" id="TIGR01082">
    <property type="entry name" value="murC"/>
    <property type="match status" value="1"/>
</dbReference>
<dbReference type="PANTHER" id="PTHR43445:SF3">
    <property type="entry name" value="UDP-N-ACETYLMURAMATE--L-ALANINE LIGASE"/>
    <property type="match status" value="1"/>
</dbReference>
<dbReference type="PANTHER" id="PTHR43445">
    <property type="entry name" value="UDP-N-ACETYLMURAMATE--L-ALANINE LIGASE-RELATED"/>
    <property type="match status" value="1"/>
</dbReference>
<dbReference type="Pfam" id="PF01225">
    <property type="entry name" value="Mur_ligase"/>
    <property type="match status" value="1"/>
</dbReference>
<dbReference type="Pfam" id="PF02875">
    <property type="entry name" value="Mur_ligase_C"/>
    <property type="match status" value="1"/>
</dbReference>
<dbReference type="Pfam" id="PF08245">
    <property type="entry name" value="Mur_ligase_M"/>
    <property type="match status" value="1"/>
</dbReference>
<dbReference type="SUPFAM" id="SSF51984">
    <property type="entry name" value="MurCD N-terminal domain"/>
    <property type="match status" value="1"/>
</dbReference>
<dbReference type="SUPFAM" id="SSF53623">
    <property type="entry name" value="MurD-like peptide ligases, catalytic domain"/>
    <property type="match status" value="1"/>
</dbReference>
<dbReference type="SUPFAM" id="SSF53244">
    <property type="entry name" value="MurD-like peptide ligases, peptide-binding domain"/>
    <property type="match status" value="1"/>
</dbReference>
<accession>O25340</accession>
<reference key="1">
    <citation type="journal article" date="1997" name="Nature">
        <title>The complete genome sequence of the gastric pathogen Helicobacter pylori.</title>
        <authorList>
            <person name="Tomb J.-F."/>
            <person name="White O."/>
            <person name="Kerlavage A.R."/>
            <person name="Clayton R.A."/>
            <person name="Sutton G.G."/>
            <person name="Fleischmann R.D."/>
            <person name="Ketchum K.A."/>
            <person name="Klenk H.-P."/>
            <person name="Gill S.R."/>
            <person name="Dougherty B.A."/>
            <person name="Nelson K.E."/>
            <person name="Quackenbush J."/>
            <person name="Zhou L."/>
            <person name="Kirkness E.F."/>
            <person name="Peterson S.N."/>
            <person name="Loftus B.J."/>
            <person name="Richardson D.L."/>
            <person name="Dodson R.J."/>
            <person name="Khalak H.G."/>
            <person name="Glodek A."/>
            <person name="McKenney K."/>
            <person name="FitzGerald L.M."/>
            <person name="Lee N."/>
            <person name="Adams M.D."/>
            <person name="Hickey E.K."/>
            <person name="Berg D.E."/>
            <person name="Gocayne J.D."/>
            <person name="Utterback T.R."/>
            <person name="Peterson J.D."/>
            <person name="Kelley J.M."/>
            <person name="Cotton M.D."/>
            <person name="Weidman J.F."/>
            <person name="Fujii C."/>
            <person name="Bowman C."/>
            <person name="Watthey L."/>
            <person name="Wallin E."/>
            <person name="Hayes W.S."/>
            <person name="Borodovsky M."/>
            <person name="Karp P.D."/>
            <person name="Smith H.O."/>
            <person name="Fraser C.M."/>
            <person name="Venter J.C."/>
        </authorList>
    </citation>
    <scope>NUCLEOTIDE SEQUENCE [LARGE SCALE GENOMIC DNA]</scope>
    <source>
        <strain>ATCC 700392 / 26695</strain>
    </source>
</reference>